<dbReference type="EC" id="3.6.1.27" evidence="1"/>
<dbReference type="EMBL" id="CT573213">
    <property type="protein sequence ID" value="CAJ62954.1"/>
    <property type="molecule type" value="Genomic_DNA"/>
</dbReference>
<dbReference type="RefSeq" id="WP_011605438.1">
    <property type="nucleotide sequence ID" value="NC_008278.1"/>
</dbReference>
<dbReference type="SMR" id="Q0RHR9"/>
<dbReference type="STRING" id="326424.FRAAL4312"/>
<dbReference type="KEGG" id="fal:FRAAL4312"/>
<dbReference type="eggNOG" id="COG1968">
    <property type="taxonomic scope" value="Bacteria"/>
</dbReference>
<dbReference type="HOGENOM" id="CLU_060296_1_0_11"/>
<dbReference type="OrthoDB" id="9808289at2"/>
<dbReference type="Proteomes" id="UP000000657">
    <property type="component" value="Chromosome"/>
</dbReference>
<dbReference type="GO" id="GO:0005886">
    <property type="term" value="C:plasma membrane"/>
    <property type="evidence" value="ECO:0007669"/>
    <property type="project" value="UniProtKB-SubCell"/>
</dbReference>
<dbReference type="GO" id="GO:0050380">
    <property type="term" value="F:undecaprenyl-diphosphatase activity"/>
    <property type="evidence" value="ECO:0007669"/>
    <property type="project" value="UniProtKB-UniRule"/>
</dbReference>
<dbReference type="GO" id="GO:0071555">
    <property type="term" value="P:cell wall organization"/>
    <property type="evidence" value="ECO:0007669"/>
    <property type="project" value="UniProtKB-KW"/>
</dbReference>
<dbReference type="GO" id="GO:0009252">
    <property type="term" value="P:peptidoglycan biosynthetic process"/>
    <property type="evidence" value="ECO:0007669"/>
    <property type="project" value="UniProtKB-KW"/>
</dbReference>
<dbReference type="GO" id="GO:0008360">
    <property type="term" value="P:regulation of cell shape"/>
    <property type="evidence" value="ECO:0007669"/>
    <property type="project" value="UniProtKB-KW"/>
</dbReference>
<dbReference type="GO" id="GO:0046677">
    <property type="term" value="P:response to antibiotic"/>
    <property type="evidence" value="ECO:0007669"/>
    <property type="project" value="UniProtKB-UniRule"/>
</dbReference>
<dbReference type="HAMAP" id="MF_01006">
    <property type="entry name" value="Undec_diphosphatase"/>
    <property type="match status" value="1"/>
</dbReference>
<dbReference type="InterPro" id="IPR003824">
    <property type="entry name" value="UppP"/>
</dbReference>
<dbReference type="NCBIfam" id="NF001392">
    <property type="entry name" value="PRK00281.2-1"/>
    <property type="match status" value="1"/>
</dbReference>
<dbReference type="NCBIfam" id="TIGR00753">
    <property type="entry name" value="undec_PP_bacA"/>
    <property type="match status" value="1"/>
</dbReference>
<dbReference type="PANTHER" id="PTHR30622">
    <property type="entry name" value="UNDECAPRENYL-DIPHOSPHATASE"/>
    <property type="match status" value="1"/>
</dbReference>
<dbReference type="PANTHER" id="PTHR30622:SF4">
    <property type="entry name" value="UNDECAPRENYL-DIPHOSPHATASE"/>
    <property type="match status" value="1"/>
</dbReference>
<dbReference type="Pfam" id="PF02673">
    <property type="entry name" value="BacA"/>
    <property type="match status" value="1"/>
</dbReference>
<sequence>MNYFEGTVLGLVQGLTEFLPVSSSAHLRITAALAGWDDPGAAFTAVTQIGTETAVLIYFRRDIARIVRAWALSWTRREMRKDTDARVGWLVLLGTIPIGLLGVTLQDAIEGPFRDLRLIATTLIVLGLILGGADWYASKGRPRGRHSLPRPRKTLRDLSVRDGLLYGLAQSAALIPGVSRSGATISGGLLLGYTREAAARYSFLLAMPAVLASGVFELKSIGGDREGGDGEEVSWGPTIVATVVAFATGYAAIAWFLRYISTRSFAPFVLYRVALGLLLLALLAGGAISADAGAAAD</sequence>
<organism>
    <name type="scientific">Frankia alni (strain DSM 45986 / CECT 9034 / ACN14a)</name>
    <dbReference type="NCBI Taxonomy" id="326424"/>
    <lineage>
        <taxon>Bacteria</taxon>
        <taxon>Bacillati</taxon>
        <taxon>Actinomycetota</taxon>
        <taxon>Actinomycetes</taxon>
        <taxon>Frankiales</taxon>
        <taxon>Frankiaceae</taxon>
        <taxon>Frankia</taxon>
    </lineage>
</organism>
<evidence type="ECO:0000255" key="1">
    <source>
        <dbReference type="HAMAP-Rule" id="MF_01006"/>
    </source>
</evidence>
<reference key="1">
    <citation type="journal article" date="2007" name="Genome Res.">
        <title>Genome characteristics of facultatively symbiotic Frankia sp. strains reflect host range and host plant biogeography.</title>
        <authorList>
            <person name="Normand P."/>
            <person name="Lapierre P."/>
            <person name="Tisa L.S."/>
            <person name="Gogarten J.P."/>
            <person name="Alloisio N."/>
            <person name="Bagnarol E."/>
            <person name="Bassi C.A."/>
            <person name="Berry A.M."/>
            <person name="Bickhart D.M."/>
            <person name="Choisne N."/>
            <person name="Couloux A."/>
            <person name="Cournoyer B."/>
            <person name="Cruveiller S."/>
            <person name="Daubin V."/>
            <person name="Demange N."/>
            <person name="Francino M.P."/>
            <person name="Goltsman E."/>
            <person name="Huang Y."/>
            <person name="Kopp O.R."/>
            <person name="Labarre L."/>
            <person name="Lapidus A."/>
            <person name="Lavire C."/>
            <person name="Marechal J."/>
            <person name="Martinez M."/>
            <person name="Mastronunzio J.E."/>
            <person name="Mullin B.C."/>
            <person name="Niemann J."/>
            <person name="Pujic P."/>
            <person name="Rawnsley T."/>
            <person name="Rouy Z."/>
            <person name="Schenowitz C."/>
            <person name="Sellstedt A."/>
            <person name="Tavares F."/>
            <person name="Tomkins J.P."/>
            <person name="Vallenet D."/>
            <person name="Valverde C."/>
            <person name="Wall L.G."/>
            <person name="Wang Y."/>
            <person name="Medigue C."/>
            <person name="Benson D.R."/>
        </authorList>
    </citation>
    <scope>NUCLEOTIDE SEQUENCE [LARGE SCALE GENOMIC DNA]</scope>
    <source>
        <strain>DSM 45986 / CECT 9034 / ACN14a</strain>
    </source>
</reference>
<gene>
    <name evidence="1" type="primary">uppP3</name>
    <name type="ordered locus">FRAAL4312</name>
</gene>
<accession>Q0RHR9</accession>
<proteinExistence type="inferred from homology"/>
<feature type="chain" id="PRO_0000290711" description="Undecaprenyl-diphosphatase 3">
    <location>
        <begin position="1"/>
        <end position="297"/>
    </location>
</feature>
<feature type="transmembrane region" description="Helical" evidence="1">
    <location>
        <begin position="39"/>
        <end position="59"/>
    </location>
</feature>
<feature type="transmembrane region" description="Helical" evidence="1">
    <location>
        <begin position="89"/>
        <end position="109"/>
    </location>
</feature>
<feature type="transmembrane region" description="Helical" evidence="1">
    <location>
        <begin position="118"/>
        <end position="138"/>
    </location>
</feature>
<feature type="transmembrane region" description="Helical" evidence="1">
    <location>
        <begin position="203"/>
        <end position="223"/>
    </location>
</feature>
<feature type="transmembrane region" description="Helical" evidence="1">
    <location>
        <begin position="237"/>
        <end position="257"/>
    </location>
</feature>
<feature type="transmembrane region" description="Helical" evidence="1">
    <location>
        <begin position="268"/>
        <end position="288"/>
    </location>
</feature>
<keyword id="KW-0046">Antibiotic resistance</keyword>
<keyword id="KW-1003">Cell membrane</keyword>
<keyword id="KW-0133">Cell shape</keyword>
<keyword id="KW-0961">Cell wall biogenesis/degradation</keyword>
<keyword id="KW-0378">Hydrolase</keyword>
<keyword id="KW-0472">Membrane</keyword>
<keyword id="KW-0573">Peptidoglycan synthesis</keyword>
<keyword id="KW-1185">Reference proteome</keyword>
<keyword id="KW-0812">Transmembrane</keyword>
<keyword id="KW-1133">Transmembrane helix</keyword>
<protein>
    <recommendedName>
        <fullName evidence="1">Undecaprenyl-diphosphatase 3</fullName>
        <ecNumber evidence="1">3.6.1.27</ecNumber>
    </recommendedName>
    <alternativeName>
        <fullName evidence="1">Bacitracin resistance protein 3</fullName>
    </alternativeName>
    <alternativeName>
        <fullName evidence="1">Undecaprenyl pyrophosphate phosphatase 3</fullName>
    </alternativeName>
</protein>
<comment type="function">
    <text evidence="1">Catalyzes the dephosphorylation of undecaprenyl diphosphate (UPP). Confers resistance to bacitracin.</text>
</comment>
<comment type="catalytic activity">
    <reaction evidence="1">
        <text>di-trans,octa-cis-undecaprenyl diphosphate + H2O = di-trans,octa-cis-undecaprenyl phosphate + phosphate + H(+)</text>
        <dbReference type="Rhea" id="RHEA:28094"/>
        <dbReference type="ChEBI" id="CHEBI:15377"/>
        <dbReference type="ChEBI" id="CHEBI:15378"/>
        <dbReference type="ChEBI" id="CHEBI:43474"/>
        <dbReference type="ChEBI" id="CHEBI:58405"/>
        <dbReference type="ChEBI" id="CHEBI:60392"/>
        <dbReference type="EC" id="3.6.1.27"/>
    </reaction>
</comment>
<comment type="subcellular location">
    <subcellularLocation>
        <location evidence="1">Cell membrane</location>
        <topology evidence="1">Multi-pass membrane protein</topology>
    </subcellularLocation>
</comment>
<comment type="miscellaneous">
    <text>Bacitracin is thought to be involved in the inhibition of peptidoglycan synthesis by sequestering undecaprenyl diphosphate, thereby reducing the pool of lipid carrier available.</text>
</comment>
<comment type="similarity">
    <text evidence="1">Belongs to the UppP family.</text>
</comment>
<name>UPPP3_FRAAA</name>